<organism>
    <name type="scientific">Escherichia coli (strain K12 / DH10B)</name>
    <dbReference type="NCBI Taxonomy" id="316385"/>
    <lineage>
        <taxon>Bacteria</taxon>
        <taxon>Pseudomonadati</taxon>
        <taxon>Pseudomonadota</taxon>
        <taxon>Gammaproteobacteria</taxon>
        <taxon>Enterobacterales</taxon>
        <taxon>Enterobacteriaceae</taxon>
        <taxon>Escherichia</taxon>
    </lineage>
</organism>
<keyword id="KW-0997">Cell inner membrane</keyword>
<keyword id="KW-1003">Cell membrane</keyword>
<keyword id="KW-0472">Membrane</keyword>
<keyword id="KW-0812">Transmembrane</keyword>
<keyword id="KW-1133">Transmembrane helix</keyword>
<reference key="1">
    <citation type="journal article" date="2008" name="J. Bacteriol.">
        <title>The complete genome sequence of Escherichia coli DH10B: insights into the biology of a laboratory workhorse.</title>
        <authorList>
            <person name="Durfee T."/>
            <person name="Nelson R."/>
            <person name="Baldwin S."/>
            <person name="Plunkett G. III"/>
            <person name="Burland V."/>
            <person name="Mau B."/>
            <person name="Petrosino J.F."/>
            <person name="Qin X."/>
            <person name="Muzny D.M."/>
            <person name="Ayele M."/>
            <person name="Gibbs R.A."/>
            <person name="Csorgo B."/>
            <person name="Posfai G."/>
            <person name="Weinstock G.M."/>
            <person name="Blattner F.R."/>
        </authorList>
    </citation>
    <scope>NUCLEOTIDE SEQUENCE [LARGE SCALE GENOMIC DNA]</scope>
    <source>
        <strain>K12 / DH10B</strain>
    </source>
</reference>
<proteinExistence type="inferred from homology"/>
<sequence length="179" mass="20790">MKQFLDFLPLVVFFAFYKIYDIYAATAALIVATAIVLIYSWVRFRKVEKMALITFVLVVVFGGLTLFFHNDEFIKWKVTVIYALFAGALLVSQWVMKKPLIQRMLGKELTLPQPVWSKLNLAWAVFFILCGLANIYIAFWLPQNIWVNFKVFGLTALTLIFTLLSGIYIYRHMPQEDKS</sequence>
<evidence type="ECO:0000255" key="1">
    <source>
        <dbReference type="HAMAP-Rule" id="MF_00189"/>
    </source>
</evidence>
<gene>
    <name evidence="1" type="primary">yciB</name>
    <name type="ordered locus">ECDH10B_1369</name>
</gene>
<protein>
    <recommendedName>
        <fullName evidence="1">Inner membrane-spanning protein YciB</fullName>
    </recommendedName>
</protein>
<comment type="function">
    <text evidence="1">Plays a role in cell envelope biogenesis, maintenance of cell envelope integrity and membrane homeostasis.</text>
</comment>
<comment type="subcellular location">
    <subcellularLocation>
        <location evidence="1">Cell inner membrane</location>
        <topology evidence="1">Multi-pass membrane protein</topology>
    </subcellularLocation>
</comment>
<comment type="similarity">
    <text evidence="1">Belongs to the YciB family.</text>
</comment>
<feature type="chain" id="PRO_1000098881" description="Inner membrane-spanning protein YciB">
    <location>
        <begin position="1"/>
        <end position="179"/>
    </location>
</feature>
<feature type="transmembrane region" description="Helical" evidence="1">
    <location>
        <begin position="22"/>
        <end position="42"/>
    </location>
</feature>
<feature type="transmembrane region" description="Helical" evidence="1">
    <location>
        <begin position="50"/>
        <end position="70"/>
    </location>
</feature>
<feature type="transmembrane region" description="Helical" evidence="1">
    <location>
        <begin position="76"/>
        <end position="96"/>
    </location>
</feature>
<feature type="transmembrane region" description="Helical" evidence="1">
    <location>
        <begin position="121"/>
        <end position="141"/>
    </location>
</feature>
<feature type="transmembrane region" description="Helical" evidence="1">
    <location>
        <begin position="149"/>
        <end position="169"/>
    </location>
</feature>
<name>YCIB_ECODH</name>
<accession>B1XBK3</accession>
<dbReference type="EMBL" id="CP000948">
    <property type="protein sequence ID" value="ACB02473.1"/>
    <property type="molecule type" value="Genomic_DNA"/>
</dbReference>
<dbReference type="RefSeq" id="WP_000808667.1">
    <property type="nucleotide sequence ID" value="NC_010473.1"/>
</dbReference>
<dbReference type="KEGG" id="ecd:ECDH10B_1369"/>
<dbReference type="HOGENOM" id="CLU_089554_2_0_6"/>
<dbReference type="GO" id="GO:0005886">
    <property type="term" value="C:plasma membrane"/>
    <property type="evidence" value="ECO:0007669"/>
    <property type="project" value="UniProtKB-SubCell"/>
</dbReference>
<dbReference type="HAMAP" id="MF_00189">
    <property type="entry name" value="YciB"/>
    <property type="match status" value="1"/>
</dbReference>
<dbReference type="InterPro" id="IPR006008">
    <property type="entry name" value="YciB"/>
</dbReference>
<dbReference type="NCBIfam" id="TIGR00997">
    <property type="entry name" value="ispZ"/>
    <property type="match status" value="1"/>
</dbReference>
<dbReference type="NCBIfam" id="NF001324">
    <property type="entry name" value="PRK00259.1-2"/>
    <property type="match status" value="1"/>
</dbReference>
<dbReference type="NCBIfam" id="NF001325">
    <property type="entry name" value="PRK00259.1-3"/>
    <property type="match status" value="1"/>
</dbReference>
<dbReference type="NCBIfam" id="NF001326">
    <property type="entry name" value="PRK00259.1-4"/>
    <property type="match status" value="1"/>
</dbReference>
<dbReference type="PANTHER" id="PTHR36917:SF1">
    <property type="entry name" value="INNER MEMBRANE-SPANNING PROTEIN YCIB"/>
    <property type="match status" value="1"/>
</dbReference>
<dbReference type="PANTHER" id="PTHR36917">
    <property type="entry name" value="INTRACELLULAR SEPTATION PROTEIN A-RELATED"/>
    <property type="match status" value="1"/>
</dbReference>
<dbReference type="Pfam" id="PF04279">
    <property type="entry name" value="IspA"/>
    <property type="match status" value="1"/>
</dbReference>